<dbReference type="EMBL" id="AB010068">
    <property type="protein sequence ID" value="BAB11215.1"/>
    <property type="status" value="ALT_SEQ"/>
    <property type="molecule type" value="Genomic_DNA"/>
</dbReference>
<dbReference type="EMBL" id="CP002688">
    <property type="protein sequence ID" value="AED93342.1"/>
    <property type="molecule type" value="Genomic_DNA"/>
</dbReference>
<dbReference type="RefSeq" id="NP_001154739.1">
    <molecule id="Q9FLU1-1"/>
    <property type="nucleotide sequence ID" value="NM_001161267.1"/>
</dbReference>
<dbReference type="BioGRID" id="17809">
    <property type="interactions" value="2"/>
</dbReference>
<dbReference type="FunCoup" id="Q9FLU1">
    <property type="interactions" value="181"/>
</dbReference>
<dbReference type="IntAct" id="Q9FLU1">
    <property type="interactions" value="1"/>
</dbReference>
<dbReference type="STRING" id="3702.Q9FLU1"/>
<dbReference type="iPTMnet" id="Q9FLU1"/>
<dbReference type="PaxDb" id="3702-AT5G24630.6"/>
<dbReference type="ProteomicsDB" id="240841">
    <molecule id="Q9FLU1-1"/>
</dbReference>
<dbReference type="EnsemblPlants" id="AT5G24630.6">
    <molecule id="Q9FLU1-1"/>
    <property type="protein sequence ID" value="AT5G24630.6"/>
    <property type="gene ID" value="AT5G24630"/>
</dbReference>
<dbReference type="GeneID" id="832534"/>
<dbReference type="Gramene" id="AT5G24630.6">
    <molecule id="Q9FLU1-1"/>
    <property type="protein sequence ID" value="AT5G24630.6"/>
    <property type="gene ID" value="AT5G24630"/>
</dbReference>
<dbReference type="KEGG" id="ath:AT5G24630"/>
<dbReference type="Araport" id="AT5G24630"/>
<dbReference type="TAIR" id="AT5G24630">
    <property type="gene designation" value="BIN4"/>
</dbReference>
<dbReference type="eggNOG" id="ENOG502QTVM">
    <property type="taxonomic scope" value="Eukaryota"/>
</dbReference>
<dbReference type="InParanoid" id="Q9FLU1"/>
<dbReference type="PhylomeDB" id="Q9FLU1"/>
<dbReference type="PRO" id="PR:Q9FLU1"/>
<dbReference type="Proteomes" id="UP000006548">
    <property type="component" value="Chromosome 5"/>
</dbReference>
<dbReference type="ExpressionAtlas" id="Q9FLU1">
    <property type="expression patterns" value="baseline and differential"/>
</dbReference>
<dbReference type="GO" id="GO:0009330">
    <property type="term" value="C:DNA topoisomerase type II (double strand cut, ATP-hydrolyzing) complex"/>
    <property type="evidence" value="ECO:0000353"/>
    <property type="project" value="TAIR"/>
</dbReference>
<dbReference type="GO" id="GO:0005634">
    <property type="term" value="C:nucleus"/>
    <property type="evidence" value="ECO:0000314"/>
    <property type="project" value="TAIR"/>
</dbReference>
<dbReference type="GO" id="GO:0003690">
    <property type="term" value="F:double-stranded DNA binding"/>
    <property type="evidence" value="ECO:0000314"/>
    <property type="project" value="TAIR"/>
</dbReference>
<dbReference type="GO" id="GO:0051276">
    <property type="term" value="P:chromosome organization"/>
    <property type="evidence" value="ECO:0000315"/>
    <property type="project" value="TAIR"/>
</dbReference>
<dbReference type="GO" id="GO:0042023">
    <property type="term" value="P:DNA endoreduplication"/>
    <property type="evidence" value="ECO:0000315"/>
    <property type="project" value="TAIR"/>
</dbReference>
<dbReference type="GO" id="GO:0009913">
    <property type="term" value="P:epidermal cell differentiation"/>
    <property type="evidence" value="ECO:0000315"/>
    <property type="project" value="TAIR"/>
</dbReference>
<dbReference type="GO" id="GO:0030307">
    <property type="term" value="P:positive regulation of cell growth"/>
    <property type="evidence" value="ECO:0000315"/>
    <property type="project" value="TAIR"/>
</dbReference>
<dbReference type="GO" id="GO:0048364">
    <property type="term" value="P:root development"/>
    <property type="evidence" value="ECO:0000315"/>
    <property type="project" value="TAIR"/>
</dbReference>
<dbReference type="GO" id="GO:0048367">
    <property type="term" value="P:shoot system development"/>
    <property type="evidence" value="ECO:0000315"/>
    <property type="project" value="TAIR"/>
</dbReference>
<dbReference type="GO" id="GO:0010090">
    <property type="term" value="P:trichome morphogenesis"/>
    <property type="evidence" value="ECO:0000315"/>
    <property type="project" value="TAIR"/>
</dbReference>
<dbReference type="InterPro" id="IPR033246">
    <property type="entry name" value="BIN4"/>
</dbReference>
<dbReference type="PANTHER" id="PTHR34810">
    <property type="entry name" value="DNA-BINDING PROTEIN BIN4"/>
    <property type="match status" value="1"/>
</dbReference>
<dbReference type="PANTHER" id="PTHR34810:SF1">
    <property type="entry name" value="DNA-BINDING PROTEIN BIN4"/>
    <property type="match status" value="1"/>
</dbReference>
<evidence type="ECO:0000256" key="1">
    <source>
        <dbReference type="SAM" id="MobiDB-lite"/>
    </source>
</evidence>
<evidence type="ECO:0000269" key="2">
    <source>
    </source>
</evidence>
<evidence type="ECO:0000269" key="3">
    <source>
    </source>
</evidence>
<evidence type="ECO:0000305" key="4"/>
<proteinExistence type="evidence at protein level"/>
<gene>
    <name type="primary">BIN4</name>
    <name type="synonym">MID</name>
    <name type="ordered locus">At5g24630</name>
    <name type="ORF">K18P6.17</name>
</gene>
<reference key="1">
    <citation type="journal article" date="2007" name="Plant Cell">
        <title>MIDGET unravels functions of the Arabidopsis topoisomerase VI complex in DNA endoreduplication, chromatin condensation, and transcriptional silencing.</title>
        <authorList>
            <person name="Kirik V."/>
            <person name="Schrader A."/>
            <person name="Uhrig J.F."/>
            <person name="Hulskamp M."/>
        </authorList>
    </citation>
    <scope>NUCLEOTIDE SEQUENCE [MRNA]</scope>
    <scope>FUNCTION</scope>
    <scope>SUBCELLULAR LOCATION</scope>
    <scope>TISSUE SPECIFICITY</scope>
    <scope>INTERACTION WITH RHL1</scope>
</reference>
<reference key="2">
    <citation type="journal article" date="1998" name="DNA Res.">
        <title>Structural analysis of Arabidopsis thaliana chromosome 5. IV. Sequence features of the regions of 1,456,315 bp covered by nineteen physically assigned P1 and TAC clones.</title>
        <authorList>
            <person name="Sato S."/>
            <person name="Kaneko T."/>
            <person name="Kotani H."/>
            <person name="Nakamura Y."/>
            <person name="Asamizu E."/>
            <person name="Miyajima N."/>
            <person name="Tabata S."/>
        </authorList>
    </citation>
    <scope>NUCLEOTIDE SEQUENCE [LARGE SCALE GENOMIC DNA]</scope>
    <source>
        <strain>cv. Columbia</strain>
    </source>
</reference>
<reference key="3">
    <citation type="journal article" date="2017" name="Plant J.">
        <title>Araport11: a complete reannotation of the Arabidopsis thaliana reference genome.</title>
        <authorList>
            <person name="Cheng C.Y."/>
            <person name="Krishnakumar V."/>
            <person name="Chan A.P."/>
            <person name="Thibaud-Nissen F."/>
            <person name="Schobel S."/>
            <person name="Town C.D."/>
        </authorList>
    </citation>
    <scope>GENOME REANNOTATION</scope>
    <source>
        <strain>cv. Columbia</strain>
    </source>
</reference>
<reference key="4">
    <citation type="journal article" date="2007" name="Plant Cell">
        <title>BIN4, a novel component of the plant DNA topoisomerase VI complex, is required for endoreduplication in Arabidopsis.</title>
        <authorList>
            <person name="Breuer C."/>
            <person name="Stacey N.J."/>
            <person name="West C.E."/>
            <person name="Zhao Y."/>
            <person name="Chory J."/>
            <person name="Tsukaya H."/>
            <person name="Azumi Y."/>
            <person name="Maxwell A."/>
            <person name="Roberts K."/>
            <person name="Sugimoto-Shirasu K."/>
        </authorList>
    </citation>
    <scope>FUNCTION</scope>
    <scope>SUBCELLULAR LOCATION</scope>
    <scope>TISSUE SPECIFICITY</scope>
    <scope>DEVELOPMENTAL STAGE</scope>
    <scope>INTERACTION WITH TOP6A; TOP6B; BIN4 AND RHL1</scope>
    <scope>DISRUPTION PHENOTYPE</scope>
</reference>
<sequence length="454" mass="49485">MSSSSREGSPDWLRSYEAPMTTSLLSLSSSDDDSPYRESEVISSLPLPDDDGDDIVVLETESVELLTRKNSETKVVTKQVSIEQVFSRKKKADASLNLEDSCAGKENGNNVDCEKLSSKHKDAQGGADSVWLVSSDSEPSSPIKQEVTVSTEKDADFVLEATEEEPAVKTVRKEKSPKTKSKSSRKTPKEGNSAQEILKTEDKDTDTTIAEQVTPEKSPKTKSKSSRKTPKEENCAQEILKTEDKDKDTDTDTIIAEEVTTDQKIKPSSGSSSRLPLVLSEKVNRTKVLVECEGDSIDLSGDMGAVGRVVVSDTTGDMYLDLKGTIYKSTIIPSRTFCVVNVGQTEAKIEAIMNDFIQLIPQSNVYEAETMVEGTLEGFTFESDDESNKNAKTAVKPADQSVGTEEETNTKAKPKAKAKGETVIGKKRGRPSKEKQPPAKKARNSAPKKPKAKK</sequence>
<comment type="function">
    <text evidence="2 3">Component of the DNA topoisomerase VI complex. Binds to DNA. Required for chromatin organization and progression of endoreduplication cycles. The loss of BIN4 activates the ATM- and ATR-dependent DNA damage responses in postmitotic cells and induces the ectopic expression of the mitotic G2/M-specific cyclin B1;1 gene in non-dividing cells.</text>
</comment>
<comment type="subunit">
    <text evidence="2 3">Interacts with TOP6A, RHL1 and itself, but not with TOP6B.</text>
</comment>
<comment type="subcellular location">
    <subcellularLocation>
        <location evidence="2 3">Nucleus</location>
    </subcellularLocation>
</comment>
<comment type="alternative products">
    <event type="alternative splicing"/>
    <isoform>
        <id>Q9FLU1-1</id>
        <name>1</name>
        <sequence type="displayed"/>
    </isoform>
    <text>A number of isoforms are produced. According to EST sequences.</text>
</comment>
<comment type="tissue specificity">
    <text evidence="2 3">Expressed in expanding cotyledons, vascular cells, elongating root cells, developing leaf trichomes, root and apical meristems and lateral root primordia.</text>
</comment>
<comment type="developmental stage">
    <text evidence="3">Ubiquitously expressed at low levels during the mitotic cell cycle.</text>
</comment>
<comment type="disruption phenotype">
    <text evidence="3">Plants show a severe dwarf phenotype. In bin4 mutants, a specific DNA damage repair checkpoint is activated preventing further progression of endoreplication cycles.</text>
</comment>
<comment type="sequence caution" evidence="4">
    <conflict type="erroneous gene model prediction">
        <sequence resource="EMBL-CDS" id="BAB11215"/>
    </conflict>
</comment>
<organism>
    <name type="scientific">Arabidopsis thaliana</name>
    <name type="common">Mouse-ear cress</name>
    <dbReference type="NCBI Taxonomy" id="3702"/>
    <lineage>
        <taxon>Eukaryota</taxon>
        <taxon>Viridiplantae</taxon>
        <taxon>Streptophyta</taxon>
        <taxon>Embryophyta</taxon>
        <taxon>Tracheophyta</taxon>
        <taxon>Spermatophyta</taxon>
        <taxon>Magnoliopsida</taxon>
        <taxon>eudicotyledons</taxon>
        <taxon>Gunneridae</taxon>
        <taxon>Pentapetalae</taxon>
        <taxon>rosids</taxon>
        <taxon>malvids</taxon>
        <taxon>Brassicales</taxon>
        <taxon>Brassicaceae</taxon>
        <taxon>Camelineae</taxon>
        <taxon>Arabidopsis</taxon>
    </lineage>
</organism>
<feature type="chain" id="PRO_0000346107" description="DNA-binding protein BIN4">
    <location>
        <begin position="1"/>
        <end position="454"/>
    </location>
</feature>
<feature type="region of interest" description="Disordered" evidence="1">
    <location>
        <begin position="24"/>
        <end position="53"/>
    </location>
</feature>
<feature type="region of interest" description="Disordered" evidence="1">
    <location>
        <begin position="103"/>
        <end position="249"/>
    </location>
</feature>
<feature type="region of interest" description="Disordered" evidence="1">
    <location>
        <begin position="380"/>
        <end position="454"/>
    </location>
</feature>
<feature type="compositionally biased region" description="Basic and acidic residues" evidence="1">
    <location>
        <begin position="112"/>
        <end position="123"/>
    </location>
</feature>
<feature type="compositionally biased region" description="Polar residues" evidence="1">
    <location>
        <begin position="132"/>
        <end position="150"/>
    </location>
</feature>
<feature type="compositionally biased region" description="Basic and acidic residues" evidence="1">
    <location>
        <begin position="229"/>
        <end position="249"/>
    </location>
</feature>
<feature type="compositionally biased region" description="Basic residues" evidence="1">
    <location>
        <begin position="438"/>
        <end position="454"/>
    </location>
</feature>
<accession>Q9FLU1</accession>
<protein>
    <recommendedName>
        <fullName>DNA-binding protein BIN4</fullName>
    </recommendedName>
    <alternativeName>
        <fullName>Protein BRASSINOSTEROID INSENSITIVE 4</fullName>
    </alternativeName>
    <alternativeName>
        <fullName>Protein MIDGET</fullName>
    </alternativeName>
</protein>
<name>BIN4_ARATH</name>
<keyword id="KW-0025">Alternative splicing</keyword>
<keyword id="KW-0238">DNA-binding</keyword>
<keyword id="KW-0539">Nucleus</keyword>
<keyword id="KW-1185">Reference proteome</keyword>